<accession>Q35648</accession>
<reference key="1">
    <citation type="journal article" date="1995" name="Proc. Natl. Acad. Sci. U.S.A.">
        <title>Recent African origin of modern humans revealed by complete sequences of hominoid mitochondrial DNAs.</title>
        <authorList>
            <person name="Horai S."/>
            <person name="Hayasaka K."/>
            <person name="Kondo R."/>
            <person name="Tsugane K."/>
            <person name="Takahata N."/>
        </authorList>
    </citation>
    <scope>NUCLEOTIDE SEQUENCE [GENOMIC DNA]</scope>
</reference>
<feature type="chain" id="PRO_0000118123" description="NADH-ubiquinone oxidoreductase chain 5">
    <location>
        <begin position="1"/>
        <end position="603"/>
    </location>
</feature>
<feature type="transmembrane region" description="Helical" evidence="3">
    <location>
        <begin position="4"/>
        <end position="24"/>
    </location>
</feature>
<feature type="transmembrane region" description="Helical" evidence="3">
    <location>
        <begin position="38"/>
        <end position="58"/>
    </location>
</feature>
<feature type="transmembrane region" description="Helical" evidence="3">
    <location>
        <begin position="87"/>
        <end position="107"/>
    </location>
</feature>
<feature type="transmembrane region" description="Helical" evidence="3">
    <location>
        <begin position="122"/>
        <end position="142"/>
    </location>
</feature>
<feature type="transmembrane region" description="Helical" evidence="3">
    <location>
        <begin position="144"/>
        <end position="160"/>
    </location>
</feature>
<feature type="transmembrane region" description="Helical" evidence="3">
    <location>
        <begin position="171"/>
        <end position="191"/>
    </location>
</feature>
<feature type="transmembrane region" description="Helical" evidence="3">
    <location>
        <begin position="211"/>
        <end position="233"/>
    </location>
</feature>
<feature type="transmembrane region" description="Helical" evidence="3">
    <location>
        <begin position="241"/>
        <end position="261"/>
    </location>
</feature>
<feature type="transmembrane region" description="Helical" evidence="3">
    <location>
        <begin position="272"/>
        <end position="292"/>
    </location>
</feature>
<feature type="transmembrane region" description="Helical" evidence="3">
    <location>
        <begin position="301"/>
        <end position="320"/>
    </location>
</feature>
<feature type="transmembrane region" description="Helical" evidence="3">
    <location>
        <begin position="325"/>
        <end position="347"/>
    </location>
</feature>
<feature type="transmembrane region" description="Helical" evidence="3">
    <location>
        <begin position="370"/>
        <end position="390"/>
    </location>
</feature>
<feature type="transmembrane region" description="Helical" evidence="3">
    <location>
        <begin position="405"/>
        <end position="422"/>
    </location>
</feature>
<feature type="transmembrane region" description="Helical" evidence="3">
    <location>
        <begin position="457"/>
        <end position="477"/>
    </location>
</feature>
<feature type="transmembrane region" description="Helical" evidence="3">
    <location>
        <begin position="482"/>
        <end position="502"/>
    </location>
</feature>
<feature type="transmembrane region" description="Helical" evidence="3">
    <location>
        <begin position="582"/>
        <end position="602"/>
    </location>
</feature>
<geneLocation type="mitochondrion"/>
<keyword id="KW-0249">Electron transport</keyword>
<keyword id="KW-0472">Membrane</keyword>
<keyword id="KW-0496">Mitochondrion</keyword>
<keyword id="KW-0999">Mitochondrion inner membrane</keyword>
<keyword id="KW-0520">NAD</keyword>
<keyword id="KW-1185">Reference proteome</keyword>
<keyword id="KW-0679">Respiratory chain</keyword>
<keyword id="KW-1278">Translocase</keyword>
<keyword id="KW-0812">Transmembrane</keyword>
<keyword id="KW-1133">Transmembrane helix</keyword>
<keyword id="KW-0813">Transport</keyword>
<keyword id="KW-0830">Ubiquinone</keyword>
<proteinExistence type="inferred from homology"/>
<organism>
    <name type="scientific">Pan troglodytes</name>
    <name type="common">Chimpanzee</name>
    <dbReference type="NCBI Taxonomy" id="9598"/>
    <lineage>
        <taxon>Eukaryota</taxon>
        <taxon>Metazoa</taxon>
        <taxon>Chordata</taxon>
        <taxon>Craniata</taxon>
        <taxon>Vertebrata</taxon>
        <taxon>Euteleostomi</taxon>
        <taxon>Mammalia</taxon>
        <taxon>Eutheria</taxon>
        <taxon>Euarchontoglires</taxon>
        <taxon>Primates</taxon>
        <taxon>Haplorrhini</taxon>
        <taxon>Catarrhini</taxon>
        <taxon>Hominidae</taxon>
        <taxon>Pan</taxon>
    </lineage>
</organism>
<gene>
    <name type="primary">MT-ND5</name>
    <name type="synonym">MTND5</name>
    <name type="synonym">NADH5</name>
    <name type="synonym">ND5</name>
</gene>
<evidence type="ECO:0000250" key="1">
    <source>
        <dbReference type="UniProtKB" id="P03915"/>
    </source>
</evidence>
<evidence type="ECO:0000250" key="2">
    <source>
        <dbReference type="UniProtKB" id="P03920"/>
    </source>
</evidence>
<evidence type="ECO:0000255" key="3"/>
<evidence type="ECO:0000305" key="4"/>
<protein>
    <recommendedName>
        <fullName>NADH-ubiquinone oxidoreductase chain 5</fullName>
        <ecNumber evidence="1">7.1.1.2</ecNumber>
    </recommendedName>
    <alternativeName>
        <fullName>NADH dehydrogenase subunit 5</fullName>
    </alternativeName>
</protein>
<dbReference type="EC" id="7.1.1.2" evidence="1"/>
<dbReference type="EMBL" id="D38113">
    <property type="protein sequence ID" value="BAA07302.1"/>
    <property type="molecule type" value="Genomic_DNA"/>
</dbReference>
<dbReference type="PIR" id="T14199">
    <property type="entry name" value="T14199"/>
</dbReference>
<dbReference type="RefSeq" id="NP_008196.1">
    <property type="nucleotide sequence ID" value="NC_001643.1"/>
</dbReference>
<dbReference type="SMR" id="Q35648"/>
<dbReference type="FunCoup" id="Q35648">
    <property type="interactions" value="574"/>
</dbReference>
<dbReference type="STRING" id="9598.ENSPTRP00000061403"/>
<dbReference type="PaxDb" id="9598-ENSPTRP00000061403"/>
<dbReference type="Ensembl" id="ENSPTRT00000076382.1">
    <property type="protein sequence ID" value="ENSPTRP00000061403.1"/>
    <property type="gene ID" value="ENSPTRG00000042651.1"/>
</dbReference>
<dbReference type="GeneID" id="807860"/>
<dbReference type="KEGG" id="ptr:807860"/>
<dbReference type="CTD" id="4540"/>
<dbReference type="VGNC" id="VGNC:11723">
    <property type="gene designation" value="MT-ND5"/>
</dbReference>
<dbReference type="eggNOG" id="KOG4668">
    <property type="taxonomic scope" value="Eukaryota"/>
</dbReference>
<dbReference type="GeneTree" id="ENSGT00730000111303"/>
<dbReference type="HOGENOM" id="CLU_007100_6_0_1"/>
<dbReference type="InParanoid" id="Q35648"/>
<dbReference type="OMA" id="GVGIMSF"/>
<dbReference type="Proteomes" id="UP000002277">
    <property type="component" value="Mitochondrion"/>
</dbReference>
<dbReference type="Bgee" id="ENSPTRG00000042651">
    <property type="expression patterns" value="Expressed in dorsolateral prefrontal cortex and 20 other cell types or tissues"/>
</dbReference>
<dbReference type="GO" id="GO:0005743">
    <property type="term" value="C:mitochondrial inner membrane"/>
    <property type="evidence" value="ECO:0000250"/>
    <property type="project" value="UniProtKB"/>
</dbReference>
<dbReference type="GO" id="GO:0045271">
    <property type="term" value="C:respiratory chain complex I"/>
    <property type="evidence" value="ECO:0000318"/>
    <property type="project" value="GO_Central"/>
</dbReference>
<dbReference type="GO" id="GO:0008137">
    <property type="term" value="F:NADH dehydrogenase (ubiquinone) activity"/>
    <property type="evidence" value="ECO:0000250"/>
    <property type="project" value="UniProtKB"/>
</dbReference>
<dbReference type="GO" id="GO:0015990">
    <property type="term" value="P:electron transport coupled proton transport"/>
    <property type="evidence" value="ECO:0000318"/>
    <property type="project" value="GO_Central"/>
</dbReference>
<dbReference type="GO" id="GO:0006120">
    <property type="term" value="P:mitochondrial electron transport, NADH to ubiquinone"/>
    <property type="evidence" value="ECO:0000250"/>
    <property type="project" value="UniProtKB"/>
</dbReference>
<dbReference type="GO" id="GO:0032981">
    <property type="term" value="P:mitochondrial respiratory chain complex I assembly"/>
    <property type="evidence" value="ECO:0000250"/>
    <property type="project" value="UniProtKB"/>
</dbReference>
<dbReference type="InterPro" id="IPR010934">
    <property type="entry name" value="NADH_DH_su5_C"/>
</dbReference>
<dbReference type="InterPro" id="IPR018393">
    <property type="entry name" value="NADHpl_OxRdtase_5_subgr"/>
</dbReference>
<dbReference type="InterPro" id="IPR001750">
    <property type="entry name" value="ND/Mrp_TM"/>
</dbReference>
<dbReference type="InterPro" id="IPR003945">
    <property type="entry name" value="NU5C-like"/>
</dbReference>
<dbReference type="InterPro" id="IPR001516">
    <property type="entry name" value="Proton_antipo_N"/>
</dbReference>
<dbReference type="NCBIfam" id="TIGR01974">
    <property type="entry name" value="NDH_I_L"/>
    <property type="match status" value="1"/>
</dbReference>
<dbReference type="PANTHER" id="PTHR42829">
    <property type="entry name" value="NADH-UBIQUINONE OXIDOREDUCTASE CHAIN 5"/>
    <property type="match status" value="1"/>
</dbReference>
<dbReference type="PANTHER" id="PTHR42829:SF2">
    <property type="entry name" value="NADH-UBIQUINONE OXIDOREDUCTASE CHAIN 5"/>
    <property type="match status" value="1"/>
</dbReference>
<dbReference type="Pfam" id="PF06455">
    <property type="entry name" value="NADH5_C"/>
    <property type="match status" value="1"/>
</dbReference>
<dbReference type="Pfam" id="PF00361">
    <property type="entry name" value="Proton_antipo_M"/>
    <property type="match status" value="1"/>
</dbReference>
<dbReference type="Pfam" id="PF00662">
    <property type="entry name" value="Proton_antipo_N"/>
    <property type="match status" value="1"/>
</dbReference>
<dbReference type="PRINTS" id="PR01434">
    <property type="entry name" value="NADHDHGNASE5"/>
</dbReference>
<name>NU5M_PANTR</name>
<comment type="function">
    <text evidence="1">Core subunit of the mitochondrial membrane respiratory chain NADH dehydrogenase (Complex I) which catalyzes electron transfer from NADH through the respiratory chain, using ubiquinone as an electron acceptor. Essential for the catalytic activity and assembly of complex I.</text>
</comment>
<comment type="catalytic activity">
    <reaction evidence="1">
        <text>a ubiquinone + NADH + 5 H(+)(in) = a ubiquinol + NAD(+) + 4 H(+)(out)</text>
        <dbReference type="Rhea" id="RHEA:29091"/>
        <dbReference type="Rhea" id="RHEA-COMP:9565"/>
        <dbReference type="Rhea" id="RHEA-COMP:9566"/>
        <dbReference type="ChEBI" id="CHEBI:15378"/>
        <dbReference type="ChEBI" id="CHEBI:16389"/>
        <dbReference type="ChEBI" id="CHEBI:17976"/>
        <dbReference type="ChEBI" id="CHEBI:57540"/>
        <dbReference type="ChEBI" id="CHEBI:57945"/>
        <dbReference type="EC" id="7.1.1.2"/>
    </reaction>
</comment>
<comment type="subunit">
    <text evidence="2">Core subunit of respiratory chain NADH dehydrogenase (Complex I) which is composed of 45 different subunits.</text>
</comment>
<comment type="subcellular location">
    <subcellularLocation>
        <location evidence="2">Mitochondrion inner membrane</location>
        <topology evidence="3">Multi-pass membrane protein</topology>
    </subcellularLocation>
</comment>
<comment type="similarity">
    <text evidence="4">Belongs to the complex I subunit 5 family.</text>
</comment>
<sequence length="603" mass="67146">MTMYATMTTLALTSLIPPILGALINPNKKNSYPHYVKSIIASTFIISLFPTTMFMCLDQETIISNWHWATTQTTQLSLSFKLDYFSMTFIPVALFVTWSIMEFSLWYMDSDPNINQFFKYLLIFLITMLILVTANNLFQLFIGWEGVGIMSFLLISWWYARTDANTAAIQAILYNRIGDIGFVLALAWFLLHSNSWDPQQMILLSTNTDLTPLLGFLLAAAGKSAQLGLHPWLPSAMEGPTPVSALLHSSTMVVAGIFLLIRFYPLAENNPLIQTLTLCLGAITTLFAAVCALTQNDIKKIVAFSTSSQLGLMMVTIGINQPHLAFLHICTHAFFKAMLFMCSGSIIHNLNNEQDIRKMGGLLKTMPLTSTSLTIGSLALAGMPFLTGFYSKDLIIETANMSYTNAWALSITLIATSLTSAYSTRMILLTLTGQPRFPTLTNINENNPTLLNPIKRLTIGSLFAGFLITNNILPMSTPQVTIPLYLKLTALGVTSLGLLTALDLNYLTSKLKMKSPLYTFHFSNMLGFYPNIMHRSIPYLGLLTSQNLPLLLLDLTWLEKLLPKTISQYQISASITTSTQKGMIKLYFLSFFFPLILTLLLIT</sequence>